<comment type="function">
    <text evidence="1">An essential GTPase that binds both GDP and GTP, with rapid nucleotide exchange. Plays a role in 16S rRNA processing and 30S ribosomal subunit biogenesis and possibly also in cell cycle regulation and energy metabolism.</text>
</comment>
<comment type="subunit">
    <text evidence="1">Monomer.</text>
</comment>
<comment type="subcellular location">
    <subcellularLocation>
        <location>Cytoplasm</location>
    </subcellularLocation>
    <subcellularLocation>
        <location evidence="1">Cell membrane</location>
        <topology evidence="1">Peripheral membrane protein</topology>
    </subcellularLocation>
</comment>
<comment type="similarity">
    <text evidence="1 2">Belongs to the TRAFAC class TrmE-Era-EngA-EngB-Septin-like GTPase superfamily. Era GTPase family.</text>
</comment>
<keyword id="KW-1003">Cell membrane</keyword>
<keyword id="KW-0963">Cytoplasm</keyword>
<keyword id="KW-0342">GTP-binding</keyword>
<keyword id="KW-0472">Membrane</keyword>
<keyword id="KW-0547">Nucleotide-binding</keyword>
<keyword id="KW-1185">Reference proteome</keyword>
<keyword id="KW-0690">Ribosome biogenesis</keyword>
<keyword id="KW-0694">RNA-binding</keyword>
<keyword id="KW-0699">rRNA-binding</keyword>
<reference key="1">
    <citation type="submission" date="2008-01" db="EMBL/GenBank/DDBJ databases">
        <title>Complete sequence of Thermoanaerobacter pseudethanolicus 39E.</title>
        <authorList>
            <person name="Copeland A."/>
            <person name="Lucas S."/>
            <person name="Lapidus A."/>
            <person name="Barry K."/>
            <person name="Glavina del Rio T."/>
            <person name="Dalin E."/>
            <person name="Tice H."/>
            <person name="Pitluck S."/>
            <person name="Bruce D."/>
            <person name="Goodwin L."/>
            <person name="Saunders E."/>
            <person name="Brettin T."/>
            <person name="Detter J.C."/>
            <person name="Han C."/>
            <person name="Schmutz J."/>
            <person name="Larimer F."/>
            <person name="Land M."/>
            <person name="Hauser L."/>
            <person name="Kyrpides N."/>
            <person name="Lykidis A."/>
            <person name="Hemme C."/>
            <person name="Fields M.W."/>
            <person name="He Z."/>
            <person name="Zhou J."/>
            <person name="Richardson P."/>
        </authorList>
    </citation>
    <scope>NUCLEOTIDE SEQUENCE [LARGE SCALE GENOMIC DNA]</scope>
    <source>
        <strain>ATCC 33223 / DSM 2355 / 39E</strain>
    </source>
</reference>
<protein>
    <recommendedName>
        <fullName evidence="1">GTPase Era</fullName>
    </recommendedName>
</protein>
<feature type="chain" id="PRO_1000121364" description="GTPase Era">
    <location>
        <begin position="1"/>
        <end position="302"/>
    </location>
</feature>
<feature type="domain" description="Era-type G" evidence="2">
    <location>
        <begin position="4"/>
        <end position="171"/>
    </location>
</feature>
<feature type="domain" description="KH type-2" evidence="1">
    <location>
        <begin position="202"/>
        <end position="280"/>
    </location>
</feature>
<feature type="region of interest" description="G1" evidence="2">
    <location>
        <begin position="12"/>
        <end position="19"/>
    </location>
</feature>
<feature type="region of interest" description="G2" evidence="2">
    <location>
        <begin position="38"/>
        <end position="42"/>
    </location>
</feature>
<feature type="region of interest" description="G3" evidence="2">
    <location>
        <begin position="59"/>
        <end position="62"/>
    </location>
</feature>
<feature type="region of interest" description="G4" evidence="2">
    <location>
        <begin position="121"/>
        <end position="124"/>
    </location>
</feature>
<feature type="region of interest" description="G5" evidence="2">
    <location>
        <begin position="150"/>
        <end position="152"/>
    </location>
</feature>
<feature type="binding site" evidence="1">
    <location>
        <begin position="12"/>
        <end position="19"/>
    </location>
    <ligand>
        <name>GTP</name>
        <dbReference type="ChEBI" id="CHEBI:37565"/>
    </ligand>
</feature>
<feature type="binding site" evidence="1">
    <location>
        <begin position="59"/>
        <end position="63"/>
    </location>
    <ligand>
        <name>GTP</name>
        <dbReference type="ChEBI" id="CHEBI:37565"/>
    </ligand>
</feature>
<feature type="binding site" evidence="1">
    <location>
        <begin position="121"/>
        <end position="124"/>
    </location>
    <ligand>
        <name>GTP</name>
        <dbReference type="ChEBI" id="CHEBI:37565"/>
    </ligand>
</feature>
<name>ERA_THEP3</name>
<gene>
    <name evidence="1" type="primary">era</name>
    <name type="ordered locus">Teth39_1365</name>
</gene>
<evidence type="ECO:0000255" key="1">
    <source>
        <dbReference type="HAMAP-Rule" id="MF_00367"/>
    </source>
</evidence>
<evidence type="ECO:0000255" key="2">
    <source>
        <dbReference type="PROSITE-ProRule" id="PRU01050"/>
    </source>
</evidence>
<accession>B0KA54</accession>
<proteinExistence type="inferred from homology"/>
<dbReference type="EMBL" id="CP000924">
    <property type="protein sequence ID" value="ABY95017.1"/>
    <property type="molecule type" value="Genomic_DNA"/>
</dbReference>
<dbReference type="RefSeq" id="WP_003867915.1">
    <property type="nucleotide sequence ID" value="NC_010321.1"/>
</dbReference>
<dbReference type="SMR" id="B0KA54"/>
<dbReference type="STRING" id="340099.Teth39_1365"/>
<dbReference type="KEGG" id="tpd:Teth39_1365"/>
<dbReference type="eggNOG" id="COG1159">
    <property type="taxonomic scope" value="Bacteria"/>
</dbReference>
<dbReference type="HOGENOM" id="CLU_038009_1_0_9"/>
<dbReference type="Proteomes" id="UP000002156">
    <property type="component" value="Chromosome"/>
</dbReference>
<dbReference type="GO" id="GO:0005829">
    <property type="term" value="C:cytosol"/>
    <property type="evidence" value="ECO:0007669"/>
    <property type="project" value="TreeGrafter"/>
</dbReference>
<dbReference type="GO" id="GO:0005886">
    <property type="term" value="C:plasma membrane"/>
    <property type="evidence" value="ECO:0007669"/>
    <property type="project" value="UniProtKB-SubCell"/>
</dbReference>
<dbReference type="GO" id="GO:0005525">
    <property type="term" value="F:GTP binding"/>
    <property type="evidence" value="ECO:0007669"/>
    <property type="project" value="UniProtKB-UniRule"/>
</dbReference>
<dbReference type="GO" id="GO:0003924">
    <property type="term" value="F:GTPase activity"/>
    <property type="evidence" value="ECO:0007669"/>
    <property type="project" value="UniProtKB-UniRule"/>
</dbReference>
<dbReference type="GO" id="GO:0043024">
    <property type="term" value="F:ribosomal small subunit binding"/>
    <property type="evidence" value="ECO:0007669"/>
    <property type="project" value="TreeGrafter"/>
</dbReference>
<dbReference type="GO" id="GO:0070181">
    <property type="term" value="F:small ribosomal subunit rRNA binding"/>
    <property type="evidence" value="ECO:0007669"/>
    <property type="project" value="UniProtKB-UniRule"/>
</dbReference>
<dbReference type="GO" id="GO:0000028">
    <property type="term" value="P:ribosomal small subunit assembly"/>
    <property type="evidence" value="ECO:0007669"/>
    <property type="project" value="TreeGrafter"/>
</dbReference>
<dbReference type="CDD" id="cd04163">
    <property type="entry name" value="Era"/>
    <property type="match status" value="1"/>
</dbReference>
<dbReference type="CDD" id="cd22534">
    <property type="entry name" value="KH-II_Era"/>
    <property type="match status" value="1"/>
</dbReference>
<dbReference type="FunFam" id="3.30.300.20:FF:000003">
    <property type="entry name" value="GTPase Era"/>
    <property type="match status" value="1"/>
</dbReference>
<dbReference type="FunFam" id="3.40.50.300:FF:000094">
    <property type="entry name" value="GTPase Era"/>
    <property type="match status" value="1"/>
</dbReference>
<dbReference type="Gene3D" id="3.30.300.20">
    <property type="match status" value="1"/>
</dbReference>
<dbReference type="Gene3D" id="3.40.50.300">
    <property type="entry name" value="P-loop containing nucleotide triphosphate hydrolases"/>
    <property type="match status" value="1"/>
</dbReference>
<dbReference type="HAMAP" id="MF_00367">
    <property type="entry name" value="GTPase_Era"/>
    <property type="match status" value="1"/>
</dbReference>
<dbReference type="InterPro" id="IPR030388">
    <property type="entry name" value="G_ERA_dom"/>
</dbReference>
<dbReference type="InterPro" id="IPR006073">
    <property type="entry name" value="GTP-bd"/>
</dbReference>
<dbReference type="InterPro" id="IPR005662">
    <property type="entry name" value="GTPase_Era-like"/>
</dbReference>
<dbReference type="InterPro" id="IPR015946">
    <property type="entry name" value="KH_dom-like_a/b"/>
</dbReference>
<dbReference type="InterPro" id="IPR004044">
    <property type="entry name" value="KH_dom_type_2"/>
</dbReference>
<dbReference type="InterPro" id="IPR009019">
    <property type="entry name" value="KH_sf_prok-type"/>
</dbReference>
<dbReference type="InterPro" id="IPR027417">
    <property type="entry name" value="P-loop_NTPase"/>
</dbReference>
<dbReference type="InterPro" id="IPR005225">
    <property type="entry name" value="Small_GTP-bd"/>
</dbReference>
<dbReference type="NCBIfam" id="TIGR00436">
    <property type="entry name" value="era"/>
    <property type="match status" value="1"/>
</dbReference>
<dbReference type="NCBIfam" id="NF000908">
    <property type="entry name" value="PRK00089.1"/>
    <property type="match status" value="1"/>
</dbReference>
<dbReference type="NCBIfam" id="TIGR00231">
    <property type="entry name" value="small_GTP"/>
    <property type="match status" value="1"/>
</dbReference>
<dbReference type="PANTHER" id="PTHR42698">
    <property type="entry name" value="GTPASE ERA"/>
    <property type="match status" value="1"/>
</dbReference>
<dbReference type="PANTHER" id="PTHR42698:SF1">
    <property type="entry name" value="GTPASE ERA, MITOCHONDRIAL"/>
    <property type="match status" value="1"/>
</dbReference>
<dbReference type="Pfam" id="PF07650">
    <property type="entry name" value="KH_2"/>
    <property type="match status" value="1"/>
</dbReference>
<dbReference type="Pfam" id="PF01926">
    <property type="entry name" value="MMR_HSR1"/>
    <property type="match status" value="1"/>
</dbReference>
<dbReference type="SUPFAM" id="SSF52540">
    <property type="entry name" value="P-loop containing nucleoside triphosphate hydrolases"/>
    <property type="match status" value="1"/>
</dbReference>
<dbReference type="SUPFAM" id="SSF54814">
    <property type="entry name" value="Prokaryotic type KH domain (KH-domain type II)"/>
    <property type="match status" value="1"/>
</dbReference>
<dbReference type="PROSITE" id="PS51713">
    <property type="entry name" value="G_ERA"/>
    <property type="match status" value="1"/>
</dbReference>
<dbReference type="PROSITE" id="PS50823">
    <property type="entry name" value="KH_TYPE_2"/>
    <property type="match status" value="1"/>
</dbReference>
<sequence length="302" mass="34776">MGHKAGFVALVGRTNVGKSTLLNAILQEKIAITSPKPQTTRNTIRGILTTDEYQVIFVDTPGIHKPKSKLSEFMIEVAKRTLKEVDLILYMIEPDTEVGPGDRYIIEHLKEVDTPVILVVNKIDLVPEKRVEETIKIFKEQYEFKDVVAISAIENKNIDLLKEKIVSLLPEGPKYYLDDYITDQPEKLIVAEIIREKMLHFLEEEVPHGVYVEVESIKEREDKDIIDIEAYIYCEKESHKGIIIGKNGQMLKKIGQSARLDLEEFYGKQVFLDLWVKTRKGWRDNTTLLKKLGYAIDKKTYE</sequence>
<organism>
    <name type="scientific">Thermoanaerobacter pseudethanolicus (strain ATCC 33223 / 39E)</name>
    <name type="common">Clostridium thermohydrosulfuricum</name>
    <dbReference type="NCBI Taxonomy" id="340099"/>
    <lineage>
        <taxon>Bacteria</taxon>
        <taxon>Bacillati</taxon>
        <taxon>Bacillota</taxon>
        <taxon>Clostridia</taxon>
        <taxon>Thermoanaerobacterales</taxon>
        <taxon>Thermoanaerobacteraceae</taxon>
        <taxon>Thermoanaerobacter</taxon>
    </lineage>
</organism>